<protein>
    <recommendedName>
        <fullName>Kappa-theraphotoxin-Cg2a</fullName>
        <shortName>Kappa-TRTX-Cg2a</shortName>
    </recommendedName>
    <alternativeName>
        <fullName>Jingzhaotoxin-12</fullName>
    </alternativeName>
    <alternativeName>
        <fullName>Jingzhaotoxin-45</fullName>
        <shortName>JZTX-45</shortName>
    </alternativeName>
    <alternativeName>
        <fullName>Jingzhaotoxin-XII</fullName>
        <shortName>JZTX-XII</shortName>
    </alternativeName>
    <alternativeName>
        <fullName>Peptide F4-20.99</fullName>
    </alternativeName>
</protein>
<organism>
    <name type="scientific">Chilobrachys guangxiensis</name>
    <name type="common">Chinese earth tiger tarantula</name>
    <name type="synonym">Chilobrachys jingzhao</name>
    <dbReference type="NCBI Taxonomy" id="278060"/>
    <lineage>
        <taxon>Eukaryota</taxon>
        <taxon>Metazoa</taxon>
        <taxon>Ecdysozoa</taxon>
        <taxon>Arthropoda</taxon>
        <taxon>Chelicerata</taxon>
        <taxon>Arachnida</taxon>
        <taxon>Araneae</taxon>
        <taxon>Mygalomorphae</taxon>
        <taxon>Theraphosidae</taxon>
        <taxon>Chilobrachys</taxon>
    </lineage>
</organism>
<comment type="function">
    <text evidence="4 5">Inhibits voltage-gated potassium channels of the subtype Kv4.1/KCND1 with high affinity and shows weak effects on Kv4.2/KCND2 and Kv2.1/KCNB1 subtypes. The toxin modifies the gating behavior of the channel and may interact with the S3-S4 extracellular loop.</text>
</comment>
<comment type="subcellular location">
    <subcellularLocation>
        <location>Secreted</location>
    </subcellularLocation>
</comment>
<comment type="tissue specificity">
    <text>Expressed by the venom gland.</text>
</comment>
<comment type="domain">
    <text evidence="1">The presence of a 'disulfide through disulfide knot' structurally defines this protein as a knottin.</text>
</comment>
<comment type="mass spectrometry"/>
<comment type="miscellaneous">
    <text evidence="7">Negative results: does not inhibit Kv1.1/KCNA1, Kv1.2/KCNA2, Kv1.3/KCNA3, Kv1.4/KCNA4 and Kv3.1/KCNC1 potassium channels.</text>
</comment>
<comment type="similarity">
    <text evidence="6">Belongs to the neurotoxin 30 (phrixotoxin) family.</text>
</comment>
<reference key="1">
    <citation type="journal article" date="2008" name="Cell. Mol. Life Sci.">
        <title>Molecular diversity and evolution of cystine knot toxins of the tarantula Chilobrachys jingzhao.</title>
        <authorList>
            <person name="Chen J."/>
            <person name="Deng M."/>
            <person name="He Q."/>
            <person name="Meng E."/>
            <person name="Jiang L."/>
            <person name="Liao Z."/>
            <person name="Rong M."/>
            <person name="Liang S."/>
        </authorList>
    </citation>
    <scope>NUCLEOTIDE SEQUENCE [LARGE SCALE MRNA]</scope>
    <scope>TOXIN TARGET</scope>
    <scope>FUNCTION</scope>
    <source>
        <tissue>Venom gland</tissue>
    </source>
</reference>
<reference key="2">
    <citation type="journal article" date="2007" name="Proteomics">
        <title>Proteomic and peptidomic analysis of the venom from Chinese tarantula Chilobrachys jingzhao.</title>
        <authorList>
            <person name="Liao Z."/>
            <person name="Cao J."/>
            <person name="Li S."/>
            <person name="Yan X."/>
            <person name="Hu W."/>
            <person name="He Q."/>
            <person name="Chen J."/>
            <person name="Tang J."/>
            <person name="Xie J."/>
            <person name="Liang S."/>
        </authorList>
    </citation>
    <scope>PROTEIN SEQUENCE OF 54-82</scope>
    <scope>AMIDATION AT LEU-82</scope>
    <scope>IDENTIFICATION BY MASS SPECTROMETRY</scope>
    <source>
        <tissue>Venom</tissue>
    </source>
</reference>
<reference key="3">
    <citation type="journal article" date="2007" name="Toxicon">
        <title>Jingzhaotoxin-XII, a gating modifier specific for Kv4.1 channels.</title>
        <authorList>
            <person name="Yuan C."/>
            <person name="Liao Z."/>
            <person name="Zeng X."/>
            <person name="Dai L."/>
            <person name="Kuang F."/>
            <person name="Liang S."/>
        </authorList>
    </citation>
    <scope>PROTEIN SEQUENCE OF 54-82</scope>
    <scope>FUNCTION</scope>
    <scope>MASS SPECTROMETRY</scope>
    <scope>3D-STRUCTURE MODELING</scope>
    <source>
        <tissue>Venom</tissue>
    </source>
</reference>
<proteinExistence type="evidence at protein level"/>
<feature type="signal peptide" evidence="2">
    <location>
        <begin position="1"/>
        <end position="21"/>
    </location>
</feature>
<feature type="propeptide" id="PRO_0000398386" evidence="3 4">
    <location>
        <begin position="22"/>
        <end position="53"/>
    </location>
</feature>
<feature type="peptide" id="PRO_0000311605" description="Kappa-theraphotoxin-Cg2a">
    <location>
        <begin position="54"/>
        <end position="82"/>
    </location>
</feature>
<feature type="modified residue" description="Leucine amide" evidence="3">
    <location>
        <position position="82"/>
    </location>
</feature>
<feature type="disulfide bond" evidence="1">
    <location>
        <begin position="55"/>
        <end position="69"/>
    </location>
</feature>
<feature type="disulfide bond" evidence="1">
    <location>
        <begin position="62"/>
        <end position="74"/>
    </location>
</feature>
<feature type="disulfide bond" evidence="1">
    <location>
        <begin position="68"/>
        <end position="78"/>
    </location>
</feature>
<accession>P0C5X7</accession>
<accession>B1P1B5</accession>
<sequence>MKGSAFAIILGLVVLCACSFAEDEQDQFASPNELLRSMFLESRHELIPEVEGRYCQKWMWTCDSERKCCEGYVCELWCKYNLG</sequence>
<name>JZT45_CHIGU</name>
<keyword id="KW-0027">Amidation</keyword>
<keyword id="KW-0903">Direct protein sequencing</keyword>
<keyword id="KW-1015">Disulfide bond</keyword>
<keyword id="KW-0872">Ion channel impairing toxin</keyword>
<keyword id="KW-0960">Knottin</keyword>
<keyword id="KW-0528">Neurotoxin</keyword>
<keyword id="KW-0632">Potassium channel impairing toxin</keyword>
<keyword id="KW-0964">Secreted</keyword>
<keyword id="KW-0732">Signal</keyword>
<keyword id="KW-0800">Toxin</keyword>
<keyword id="KW-1220">Voltage-gated potassium channel impairing toxin</keyword>
<dbReference type="EMBL" id="EU233846">
    <property type="protein sequence ID" value="ABY71665.1"/>
    <property type="molecule type" value="mRNA"/>
</dbReference>
<dbReference type="SMR" id="P0C5X7"/>
<dbReference type="ArachnoServer" id="AS000044">
    <property type="toxin name" value="kappa-theraphotoxin-Cg2a"/>
</dbReference>
<dbReference type="GO" id="GO:0005576">
    <property type="term" value="C:extracellular region"/>
    <property type="evidence" value="ECO:0007669"/>
    <property type="project" value="UniProtKB-SubCell"/>
</dbReference>
<dbReference type="GO" id="GO:0015459">
    <property type="term" value="F:potassium channel regulator activity"/>
    <property type="evidence" value="ECO:0007669"/>
    <property type="project" value="UniProtKB-KW"/>
</dbReference>
<dbReference type="GO" id="GO:0090729">
    <property type="term" value="F:toxin activity"/>
    <property type="evidence" value="ECO:0007669"/>
    <property type="project" value="UniProtKB-KW"/>
</dbReference>
<dbReference type="SUPFAM" id="SSF57059">
    <property type="entry name" value="omega toxin-like"/>
    <property type="match status" value="1"/>
</dbReference>
<evidence type="ECO:0000250" key="1"/>
<evidence type="ECO:0000255" key="2"/>
<evidence type="ECO:0000269" key="3">
    <source>
    </source>
</evidence>
<evidence type="ECO:0000269" key="4">
    <source>
    </source>
</evidence>
<evidence type="ECO:0000269" key="5">
    <source>
    </source>
</evidence>
<evidence type="ECO:0000305" key="6"/>
<evidence type="ECO:0000305" key="7">
    <source>
    </source>
</evidence>